<proteinExistence type="evidence at transcript level"/>
<protein>
    <recommendedName>
        <fullName>U11-lycotoxin-Ls1d</fullName>
    </recommendedName>
    <alternativeName>
        <fullName>Toxin-like structure LSTX-J8</fullName>
    </alternativeName>
</protein>
<accession>B6DD10</accession>
<comment type="subcellular location">
    <subcellularLocation>
        <location evidence="1">Secreted</location>
    </subcellularLocation>
</comment>
<comment type="tissue specificity">
    <text>Expressed by the venom gland.</text>
</comment>
<comment type="PTM">
    <text evidence="1">Contains 4 disulfide bonds.</text>
</comment>
<comment type="similarity">
    <text evidence="3">Belongs to the neurotoxin 19 (CSTX) family. 10 (U11-Lctx) subfamily.</text>
</comment>
<organism>
    <name type="scientific">Lycosa singoriensis</name>
    <name type="common">Wolf spider</name>
    <name type="synonym">Aranea singoriensis</name>
    <dbReference type="NCBI Taxonomy" id="434756"/>
    <lineage>
        <taxon>Eukaryota</taxon>
        <taxon>Metazoa</taxon>
        <taxon>Ecdysozoa</taxon>
        <taxon>Arthropoda</taxon>
        <taxon>Chelicerata</taxon>
        <taxon>Arachnida</taxon>
        <taxon>Araneae</taxon>
        <taxon>Araneomorphae</taxon>
        <taxon>Entelegynae</taxon>
        <taxon>Lycosoidea</taxon>
        <taxon>Lycosidae</taxon>
        <taxon>Lycosa</taxon>
    </lineage>
</organism>
<keyword id="KW-1015">Disulfide bond</keyword>
<keyword id="KW-0964">Secreted</keyword>
<keyword id="KW-0732">Signal</keyword>
<keyword id="KW-0800">Toxin</keyword>
<sequence>MKLIIFTGLVLFAIVSLIEAEEESGRGCILLYGECTKATDSCCSNLICDCYRKLEKGVQIARQCFCSEKDVIYKKDI</sequence>
<name>TXB08_LYCSI</name>
<dbReference type="EMBL" id="EU926094">
    <property type="protein sequence ID" value="ACI41426.1"/>
    <property type="molecule type" value="mRNA"/>
</dbReference>
<dbReference type="EMBL" id="FM864098">
    <property type="protein sequence ID" value="CAS03695.1"/>
    <property type="molecule type" value="mRNA"/>
</dbReference>
<dbReference type="SMR" id="B6DD10"/>
<dbReference type="ArachnoServer" id="AS001033">
    <property type="toxin name" value="U11-lycotoxin-Ls1d"/>
</dbReference>
<dbReference type="GO" id="GO:0005576">
    <property type="term" value="C:extracellular region"/>
    <property type="evidence" value="ECO:0007669"/>
    <property type="project" value="UniProtKB-SubCell"/>
</dbReference>
<dbReference type="GO" id="GO:0090729">
    <property type="term" value="F:toxin activity"/>
    <property type="evidence" value="ECO:0007669"/>
    <property type="project" value="UniProtKB-KW"/>
</dbReference>
<dbReference type="InterPro" id="IPR019553">
    <property type="entry name" value="Spider_toxin_CSTX_knottin"/>
</dbReference>
<dbReference type="Pfam" id="PF10530">
    <property type="entry name" value="Toxin_35"/>
    <property type="match status" value="1"/>
</dbReference>
<feature type="signal peptide" evidence="2">
    <location>
        <begin position="1"/>
        <end position="20"/>
    </location>
</feature>
<feature type="propeptide" id="PRO_0000401833" evidence="1">
    <location>
        <begin position="21"/>
        <end position="26"/>
    </location>
</feature>
<feature type="chain" id="PRO_0000401834" description="U11-lycotoxin-Ls1d">
    <location>
        <begin position="27"/>
        <end position="77"/>
    </location>
</feature>
<reference key="1">
    <citation type="journal article" date="2010" name="Zoology">
        <title>Transcriptome analysis of the venom glands of the Chinese wolf spider Lycosa singoriensis.</title>
        <authorList>
            <person name="Zhang Y."/>
            <person name="Chen J."/>
            <person name="Tang X."/>
            <person name="Wang F."/>
            <person name="Jiang L."/>
            <person name="Xiong X."/>
            <person name="Wang M."/>
            <person name="Rong M."/>
            <person name="Liu Z."/>
            <person name="Liang S."/>
        </authorList>
    </citation>
    <scope>NUCLEOTIDE SEQUENCE [LARGE SCALE MRNA]</scope>
    <source>
        <tissue>Venom gland</tissue>
    </source>
</reference>
<evidence type="ECO:0000250" key="1"/>
<evidence type="ECO:0000255" key="2"/>
<evidence type="ECO:0000305" key="3"/>